<name>RSMA_BAUCH</name>
<evidence type="ECO:0000255" key="1">
    <source>
        <dbReference type="HAMAP-Rule" id="MF_00607"/>
    </source>
</evidence>
<reference key="1">
    <citation type="journal article" date="2006" name="PLoS Biol.">
        <title>Metabolic complementarity and genomics of the dual bacterial symbiosis of sharpshooters.</title>
        <authorList>
            <person name="Wu D."/>
            <person name="Daugherty S.C."/>
            <person name="Van Aken S.E."/>
            <person name="Pai G.H."/>
            <person name="Watkins K.L."/>
            <person name="Khouri H."/>
            <person name="Tallon L.J."/>
            <person name="Zaborsky J.M."/>
            <person name="Dunbar H.E."/>
            <person name="Tran P.L."/>
            <person name="Moran N.A."/>
            <person name="Eisen J.A."/>
        </authorList>
    </citation>
    <scope>NUCLEOTIDE SEQUENCE [LARGE SCALE GENOMIC DNA]</scope>
</reference>
<sequence>MYNYFYQGHLVRKCLGQHFLHDQNIIESIVAVIHPLPSQALVEIGPGLGALTKYVAKYVKTITVIELDHNLVAYLANHPILQHKLNILSQDVMKVNFSDLAKKLSQPLRIFGNLPYNISIALMFNLFRHIHMIRDMHFMLQKEVVSRLLAKPNNKNYGKLSVIAQHYCQIDLVLDVPPESFRPVPQVDSAVVRLVPYVIPPYPVKDINKLYLLTSLAFQQRRKTIRNSLRNLFSVEQLLTQGIISTLRAENLSVEQYCCLASTLAECLPKK</sequence>
<organism>
    <name type="scientific">Baumannia cicadellinicola subsp. Homalodisca coagulata</name>
    <dbReference type="NCBI Taxonomy" id="374463"/>
    <lineage>
        <taxon>Bacteria</taxon>
        <taxon>Pseudomonadati</taxon>
        <taxon>Pseudomonadota</taxon>
        <taxon>Gammaproteobacteria</taxon>
        <taxon>Candidatus Palibaumannia</taxon>
    </lineage>
</organism>
<accession>Q1LSS2</accession>
<proteinExistence type="inferred from homology"/>
<dbReference type="EC" id="2.1.1.182" evidence="1"/>
<dbReference type="EMBL" id="CP000238">
    <property type="protein sequence ID" value="ABF14245.1"/>
    <property type="molecule type" value="Genomic_DNA"/>
</dbReference>
<dbReference type="RefSeq" id="WP_011520725.1">
    <property type="nucleotide sequence ID" value="NC_007984.1"/>
</dbReference>
<dbReference type="SMR" id="Q1LSS2"/>
<dbReference type="STRING" id="374463.BCI_0563"/>
<dbReference type="KEGG" id="bci:BCI_0563"/>
<dbReference type="HOGENOM" id="CLU_041220_0_1_6"/>
<dbReference type="OrthoDB" id="9814755at2"/>
<dbReference type="Proteomes" id="UP000002427">
    <property type="component" value="Chromosome"/>
</dbReference>
<dbReference type="GO" id="GO:0005829">
    <property type="term" value="C:cytosol"/>
    <property type="evidence" value="ECO:0007669"/>
    <property type="project" value="TreeGrafter"/>
</dbReference>
<dbReference type="GO" id="GO:0052908">
    <property type="term" value="F:16S rRNA (adenine(1518)-N(6)/adenine(1519)-N(6))-dimethyltransferase activity"/>
    <property type="evidence" value="ECO:0007669"/>
    <property type="project" value="UniProtKB-EC"/>
</dbReference>
<dbReference type="GO" id="GO:0003723">
    <property type="term" value="F:RNA binding"/>
    <property type="evidence" value="ECO:0007669"/>
    <property type="project" value="UniProtKB-KW"/>
</dbReference>
<dbReference type="FunFam" id="1.10.8.100:FF:000001">
    <property type="entry name" value="Ribosomal RNA small subunit methyltransferase A"/>
    <property type="match status" value="1"/>
</dbReference>
<dbReference type="Gene3D" id="1.10.8.100">
    <property type="entry name" value="Ribosomal RNA adenine dimethylase-like, domain 2"/>
    <property type="match status" value="1"/>
</dbReference>
<dbReference type="Gene3D" id="3.40.50.150">
    <property type="entry name" value="Vaccinia Virus protein VP39"/>
    <property type="match status" value="1"/>
</dbReference>
<dbReference type="HAMAP" id="MF_00607">
    <property type="entry name" value="16SrRNA_methyltr_A"/>
    <property type="match status" value="1"/>
</dbReference>
<dbReference type="InterPro" id="IPR001737">
    <property type="entry name" value="KsgA/Erm"/>
</dbReference>
<dbReference type="InterPro" id="IPR023165">
    <property type="entry name" value="rRNA_Ade_diMease-like_C"/>
</dbReference>
<dbReference type="InterPro" id="IPR020596">
    <property type="entry name" value="rRNA_Ade_Mease_Trfase_CS"/>
</dbReference>
<dbReference type="InterPro" id="IPR020598">
    <property type="entry name" value="rRNA_Ade_methylase_Trfase_N"/>
</dbReference>
<dbReference type="InterPro" id="IPR011530">
    <property type="entry name" value="rRNA_adenine_dimethylase"/>
</dbReference>
<dbReference type="InterPro" id="IPR029063">
    <property type="entry name" value="SAM-dependent_MTases_sf"/>
</dbReference>
<dbReference type="NCBIfam" id="TIGR00755">
    <property type="entry name" value="ksgA"/>
    <property type="match status" value="1"/>
</dbReference>
<dbReference type="PANTHER" id="PTHR11727">
    <property type="entry name" value="DIMETHYLADENOSINE TRANSFERASE"/>
    <property type="match status" value="1"/>
</dbReference>
<dbReference type="PANTHER" id="PTHR11727:SF7">
    <property type="entry name" value="DIMETHYLADENOSINE TRANSFERASE-RELATED"/>
    <property type="match status" value="1"/>
</dbReference>
<dbReference type="Pfam" id="PF00398">
    <property type="entry name" value="RrnaAD"/>
    <property type="match status" value="1"/>
</dbReference>
<dbReference type="SMART" id="SM00650">
    <property type="entry name" value="rADc"/>
    <property type="match status" value="1"/>
</dbReference>
<dbReference type="SUPFAM" id="SSF53335">
    <property type="entry name" value="S-adenosyl-L-methionine-dependent methyltransferases"/>
    <property type="match status" value="1"/>
</dbReference>
<dbReference type="PROSITE" id="PS01131">
    <property type="entry name" value="RRNA_A_DIMETH"/>
    <property type="match status" value="1"/>
</dbReference>
<dbReference type="PROSITE" id="PS51689">
    <property type="entry name" value="SAM_RNA_A_N6_MT"/>
    <property type="match status" value="1"/>
</dbReference>
<feature type="chain" id="PRO_0000271902" description="Ribosomal RNA small subunit methyltransferase A">
    <location>
        <begin position="1"/>
        <end position="271"/>
    </location>
</feature>
<feature type="binding site" evidence="1">
    <location>
        <position position="18"/>
    </location>
    <ligand>
        <name>S-adenosyl-L-methionine</name>
        <dbReference type="ChEBI" id="CHEBI:59789"/>
    </ligand>
</feature>
<feature type="binding site" evidence="1">
    <location>
        <position position="20"/>
    </location>
    <ligand>
        <name>S-adenosyl-L-methionine</name>
        <dbReference type="ChEBI" id="CHEBI:59789"/>
    </ligand>
</feature>
<feature type="binding site" evidence="1">
    <location>
        <position position="45"/>
    </location>
    <ligand>
        <name>S-adenosyl-L-methionine</name>
        <dbReference type="ChEBI" id="CHEBI:59789"/>
    </ligand>
</feature>
<feature type="binding site" evidence="1">
    <location>
        <position position="66"/>
    </location>
    <ligand>
        <name>S-adenosyl-L-methionine</name>
        <dbReference type="ChEBI" id="CHEBI:59789"/>
    </ligand>
</feature>
<feature type="binding site" evidence="1">
    <location>
        <position position="91"/>
    </location>
    <ligand>
        <name>S-adenosyl-L-methionine</name>
        <dbReference type="ChEBI" id="CHEBI:59789"/>
    </ligand>
</feature>
<feature type="binding site" evidence="1">
    <location>
        <position position="113"/>
    </location>
    <ligand>
        <name>S-adenosyl-L-methionine</name>
        <dbReference type="ChEBI" id="CHEBI:59789"/>
    </ligand>
</feature>
<protein>
    <recommendedName>
        <fullName evidence="1">Ribosomal RNA small subunit methyltransferase A</fullName>
        <ecNumber evidence="1">2.1.1.182</ecNumber>
    </recommendedName>
    <alternativeName>
        <fullName evidence="1">16S rRNA (adenine(1518)-N(6)/adenine(1519)-N(6))-dimethyltransferase</fullName>
    </alternativeName>
    <alternativeName>
        <fullName evidence="1">16S rRNA dimethyladenosine transferase</fullName>
    </alternativeName>
    <alternativeName>
        <fullName evidence="1">16S rRNA dimethylase</fullName>
    </alternativeName>
    <alternativeName>
        <fullName evidence="1">S-adenosylmethionine-6-N', N'-adenosyl(rRNA) dimethyltransferase</fullName>
    </alternativeName>
</protein>
<comment type="function">
    <text evidence="1">Specifically dimethylates two adjacent adenosines (A1518 and A1519) in the loop of a conserved hairpin near the 3'-end of 16S rRNA in the 30S particle. May play a critical role in biogenesis of 30S subunits.</text>
</comment>
<comment type="catalytic activity">
    <reaction evidence="1">
        <text>adenosine(1518)/adenosine(1519) in 16S rRNA + 4 S-adenosyl-L-methionine = N(6)-dimethyladenosine(1518)/N(6)-dimethyladenosine(1519) in 16S rRNA + 4 S-adenosyl-L-homocysteine + 4 H(+)</text>
        <dbReference type="Rhea" id="RHEA:19609"/>
        <dbReference type="Rhea" id="RHEA-COMP:10232"/>
        <dbReference type="Rhea" id="RHEA-COMP:10233"/>
        <dbReference type="ChEBI" id="CHEBI:15378"/>
        <dbReference type="ChEBI" id="CHEBI:57856"/>
        <dbReference type="ChEBI" id="CHEBI:59789"/>
        <dbReference type="ChEBI" id="CHEBI:74411"/>
        <dbReference type="ChEBI" id="CHEBI:74493"/>
        <dbReference type="EC" id="2.1.1.182"/>
    </reaction>
</comment>
<comment type="subcellular location">
    <subcellularLocation>
        <location evidence="1">Cytoplasm</location>
    </subcellularLocation>
</comment>
<comment type="similarity">
    <text evidence="1">Belongs to the class I-like SAM-binding methyltransferase superfamily. rRNA adenine N(6)-methyltransferase family. RsmA subfamily.</text>
</comment>
<gene>
    <name evidence="1" type="primary">rsmA</name>
    <name evidence="1" type="synonym">ksgA</name>
    <name type="ordered locus">BCI_0563</name>
</gene>
<keyword id="KW-0963">Cytoplasm</keyword>
<keyword id="KW-0489">Methyltransferase</keyword>
<keyword id="KW-1185">Reference proteome</keyword>
<keyword id="KW-0694">RNA-binding</keyword>
<keyword id="KW-0698">rRNA processing</keyword>
<keyword id="KW-0949">S-adenosyl-L-methionine</keyword>
<keyword id="KW-0808">Transferase</keyword>